<organism>
    <name type="scientific">Streptococcus suis (strain 98HAH33)</name>
    <dbReference type="NCBI Taxonomy" id="391296"/>
    <lineage>
        <taxon>Bacteria</taxon>
        <taxon>Bacillati</taxon>
        <taxon>Bacillota</taxon>
        <taxon>Bacilli</taxon>
        <taxon>Lactobacillales</taxon>
        <taxon>Streptococcaceae</taxon>
        <taxon>Streptococcus</taxon>
    </lineage>
</organism>
<keyword id="KW-0030">Aminoacyl-tRNA synthetase</keyword>
<keyword id="KW-0067">ATP-binding</keyword>
<keyword id="KW-0963">Cytoplasm</keyword>
<keyword id="KW-0436">Ligase</keyword>
<keyword id="KW-0547">Nucleotide-binding</keyword>
<keyword id="KW-0648">Protein biosynthesis</keyword>
<reference key="1">
    <citation type="journal article" date="2007" name="PLoS ONE">
        <title>A glimpse of streptococcal toxic shock syndrome from comparative genomics of S. suis 2 Chinese isolates.</title>
        <authorList>
            <person name="Chen C."/>
            <person name="Tang J."/>
            <person name="Dong W."/>
            <person name="Wang C."/>
            <person name="Feng Y."/>
            <person name="Wang J."/>
            <person name="Zheng F."/>
            <person name="Pan X."/>
            <person name="Liu D."/>
            <person name="Li M."/>
            <person name="Song Y."/>
            <person name="Zhu X."/>
            <person name="Sun H."/>
            <person name="Feng T."/>
            <person name="Guo Z."/>
            <person name="Ju A."/>
            <person name="Ge J."/>
            <person name="Dong Y."/>
            <person name="Sun W."/>
            <person name="Jiang Y."/>
            <person name="Wang J."/>
            <person name="Yan J."/>
            <person name="Yang H."/>
            <person name="Wang X."/>
            <person name="Gao G.F."/>
            <person name="Yang R."/>
            <person name="Wang J."/>
            <person name="Yu J."/>
        </authorList>
    </citation>
    <scope>NUCLEOTIDE SEQUENCE [LARGE SCALE GENOMIC DNA]</scope>
    <source>
        <strain>98HAH33</strain>
    </source>
</reference>
<feature type="chain" id="PRO_0000334827" description="Leucine--tRNA ligase">
    <location>
        <begin position="1"/>
        <end position="833"/>
    </location>
</feature>
<feature type="short sequence motif" description="'HIGH' region">
    <location>
        <begin position="41"/>
        <end position="52"/>
    </location>
</feature>
<feature type="short sequence motif" description="'KMSKS' region">
    <location>
        <begin position="610"/>
        <end position="614"/>
    </location>
</feature>
<feature type="binding site" evidence="1">
    <location>
        <position position="613"/>
    </location>
    <ligand>
        <name>ATP</name>
        <dbReference type="ChEBI" id="CHEBI:30616"/>
    </ligand>
</feature>
<proteinExistence type="inferred from homology"/>
<comment type="catalytic activity">
    <reaction evidence="1">
        <text>tRNA(Leu) + L-leucine + ATP = L-leucyl-tRNA(Leu) + AMP + diphosphate</text>
        <dbReference type="Rhea" id="RHEA:11688"/>
        <dbReference type="Rhea" id="RHEA-COMP:9613"/>
        <dbReference type="Rhea" id="RHEA-COMP:9622"/>
        <dbReference type="ChEBI" id="CHEBI:30616"/>
        <dbReference type="ChEBI" id="CHEBI:33019"/>
        <dbReference type="ChEBI" id="CHEBI:57427"/>
        <dbReference type="ChEBI" id="CHEBI:78442"/>
        <dbReference type="ChEBI" id="CHEBI:78494"/>
        <dbReference type="ChEBI" id="CHEBI:456215"/>
        <dbReference type="EC" id="6.1.1.4"/>
    </reaction>
</comment>
<comment type="subcellular location">
    <subcellularLocation>
        <location evidence="1">Cytoplasm</location>
    </subcellularLocation>
</comment>
<comment type="similarity">
    <text evidence="1">Belongs to the class-I aminoacyl-tRNA synthetase family.</text>
</comment>
<comment type="sequence caution" evidence="2">
    <conflict type="erroneous initiation">
        <sequence resource="EMBL-CDS" id="ABP93242"/>
    </conflict>
</comment>
<sequence>MSFYNHKEIEPKWQEFWAKNHTFKTGTDAEKPNFYALDMFPYPSGAGLHVGHPEGYTATDILSRYKRAQGYNVLHPMGWDAFGLPAEQYAMDTGNDPADFTAENIANFKRQINALGFSYDWDREVNTTDPNYYKWTQWIFTKLYEKGLAYEAEVPVNWVEELGTAIANEEVLPDGTSERGGYPVVRKPMRQWMLKITAYAERLLNDLEEVDWPESIKDMQRNWIGKSTGANVTFKIKDTDKDFTVFTTRPDTLFGATYAVLAPEHDLVDSITSAEQAEAVAEYKRQASLKSDLARTDLAKDKTGVWTGAYAINPVNGKEIPIWIADYVLASYGTGAIMAVPAHDERDWEFAKQFGLDIIPVLEGGNVEEAPYTEDGAHINSDFLDGLNKEEAIAKMVAWLEENGVGQEKISYRLRDWLFSRQRYWGEPIPIIHWEDGTSTAVPENELPLVLPKTSDIKPSGTGESPLANLTDWLEVVREDGVKGRRETNTMPQWAGSSWYYLRYIDPHNDEKLADEDLLKAWLPVDIYIGGAEHAVLHLLYARFWHKFLYDLGVVPTKEPFQKLFNQGMILGTSYRDSRGALVATDKVEKRDGSFFHMETGEELEQAPAKMSKSLKNVVNPDDVVEQFGADTLRVYEMFMGPLDASIAWSEEGLEGSRKFLDRVYRLLTTKELVAENSGALDKVYNETVKTVTEHIEDLKFNTAIAQLMIFVNAANKEDKLYVDYAKGFVQLIAPFAPHLAEELWQGLANTGQSISYVAWPTYDESKLVESEVEIVVQIKGKVKARLTVAKDLAPAELEKVALADEKVQAEIAGQTVVKVISVPNKLVNIVVK</sequence>
<gene>
    <name evidence="1" type="primary">leuS</name>
    <name type="ordered locus">SSU98_2084</name>
</gene>
<accession>A4W4F3</accession>
<name>SYL_STRS2</name>
<protein>
    <recommendedName>
        <fullName evidence="1">Leucine--tRNA ligase</fullName>
        <ecNumber evidence="1">6.1.1.4</ecNumber>
    </recommendedName>
    <alternativeName>
        <fullName evidence="1">Leucyl-tRNA synthetase</fullName>
        <shortName evidence="1">LeuRS</shortName>
    </alternativeName>
</protein>
<evidence type="ECO:0000255" key="1">
    <source>
        <dbReference type="HAMAP-Rule" id="MF_00049"/>
    </source>
</evidence>
<evidence type="ECO:0000305" key="2"/>
<dbReference type="EC" id="6.1.1.4" evidence="1"/>
<dbReference type="EMBL" id="CP000408">
    <property type="protein sequence ID" value="ABP93242.1"/>
    <property type="status" value="ALT_INIT"/>
    <property type="molecule type" value="Genomic_DNA"/>
</dbReference>
<dbReference type="SMR" id="A4W4F3"/>
<dbReference type="KEGG" id="ssv:SSU98_2084"/>
<dbReference type="HOGENOM" id="CLU_004427_0_0_9"/>
<dbReference type="GO" id="GO:0005829">
    <property type="term" value="C:cytosol"/>
    <property type="evidence" value="ECO:0007669"/>
    <property type="project" value="TreeGrafter"/>
</dbReference>
<dbReference type="GO" id="GO:0002161">
    <property type="term" value="F:aminoacyl-tRNA deacylase activity"/>
    <property type="evidence" value="ECO:0007669"/>
    <property type="project" value="InterPro"/>
</dbReference>
<dbReference type="GO" id="GO:0005524">
    <property type="term" value="F:ATP binding"/>
    <property type="evidence" value="ECO:0007669"/>
    <property type="project" value="UniProtKB-UniRule"/>
</dbReference>
<dbReference type="GO" id="GO:0004823">
    <property type="term" value="F:leucine-tRNA ligase activity"/>
    <property type="evidence" value="ECO:0007669"/>
    <property type="project" value="UniProtKB-UniRule"/>
</dbReference>
<dbReference type="GO" id="GO:0006429">
    <property type="term" value="P:leucyl-tRNA aminoacylation"/>
    <property type="evidence" value="ECO:0007669"/>
    <property type="project" value="UniProtKB-UniRule"/>
</dbReference>
<dbReference type="CDD" id="cd07958">
    <property type="entry name" value="Anticodon_Ia_Leu_BEm"/>
    <property type="match status" value="1"/>
</dbReference>
<dbReference type="CDD" id="cd00812">
    <property type="entry name" value="LeuRS_core"/>
    <property type="match status" value="1"/>
</dbReference>
<dbReference type="FunFam" id="1.10.730.10:FF:000012">
    <property type="entry name" value="Leucine--tRNA ligase"/>
    <property type="match status" value="1"/>
</dbReference>
<dbReference type="FunFam" id="3.40.50.620:FF:000056">
    <property type="entry name" value="Leucine--tRNA ligase"/>
    <property type="match status" value="1"/>
</dbReference>
<dbReference type="FunFam" id="3.40.50.620:FF:000077">
    <property type="entry name" value="Leucine--tRNA ligase"/>
    <property type="match status" value="1"/>
</dbReference>
<dbReference type="FunFam" id="1.10.730.10:FF:000011">
    <property type="entry name" value="Leucine--tRNA ligase chloroplastic/mitochondrial"/>
    <property type="match status" value="1"/>
</dbReference>
<dbReference type="Gene3D" id="3.40.50.620">
    <property type="entry name" value="HUPs"/>
    <property type="match status" value="2"/>
</dbReference>
<dbReference type="Gene3D" id="1.10.730.10">
    <property type="entry name" value="Isoleucyl-tRNA Synthetase, Domain 1"/>
    <property type="match status" value="1"/>
</dbReference>
<dbReference type="Gene3D" id="3.90.740.10">
    <property type="entry name" value="Valyl/Leucyl/Isoleucyl-tRNA synthetase, editing domain"/>
    <property type="match status" value="1"/>
</dbReference>
<dbReference type="HAMAP" id="MF_00049_B">
    <property type="entry name" value="Leu_tRNA_synth_B"/>
    <property type="match status" value="1"/>
</dbReference>
<dbReference type="InterPro" id="IPR001412">
    <property type="entry name" value="aa-tRNA-synth_I_CS"/>
</dbReference>
<dbReference type="InterPro" id="IPR002300">
    <property type="entry name" value="aa-tRNA-synth_Ia"/>
</dbReference>
<dbReference type="InterPro" id="IPR002302">
    <property type="entry name" value="Leu-tRNA-ligase"/>
</dbReference>
<dbReference type="InterPro" id="IPR025709">
    <property type="entry name" value="Leu_tRNA-synth_edit"/>
</dbReference>
<dbReference type="InterPro" id="IPR013155">
    <property type="entry name" value="M/V/L/I-tRNA-synth_anticd-bd"/>
</dbReference>
<dbReference type="InterPro" id="IPR015413">
    <property type="entry name" value="Methionyl/Leucyl_tRNA_Synth"/>
</dbReference>
<dbReference type="InterPro" id="IPR014729">
    <property type="entry name" value="Rossmann-like_a/b/a_fold"/>
</dbReference>
<dbReference type="InterPro" id="IPR009080">
    <property type="entry name" value="tRNAsynth_Ia_anticodon-bd"/>
</dbReference>
<dbReference type="InterPro" id="IPR009008">
    <property type="entry name" value="Val/Leu/Ile-tRNA-synth_edit"/>
</dbReference>
<dbReference type="NCBIfam" id="TIGR00396">
    <property type="entry name" value="leuS_bact"/>
    <property type="match status" value="1"/>
</dbReference>
<dbReference type="PANTHER" id="PTHR43740:SF2">
    <property type="entry name" value="LEUCINE--TRNA LIGASE, MITOCHONDRIAL"/>
    <property type="match status" value="1"/>
</dbReference>
<dbReference type="PANTHER" id="PTHR43740">
    <property type="entry name" value="LEUCYL-TRNA SYNTHETASE"/>
    <property type="match status" value="1"/>
</dbReference>
<dbReference type="Pfam" id="PF08264">
    <property type="entry name" value="Anticodon_1"/>
    <property type="match status" value="1"/>
</dbReference>
<dbReference type="Pfam" id="PF00133">
    <property type="entry name" value="tRNA-synt_1"/>
    <property type="match status" value="2"/>
</dbReference>
<dbReference type="Pfam" id="PF13603">
    <property type="entry name" value="tRNA-synt_1_2"/>
    <property type="match status" value="1"/>
</dbReference>
<dbReference type="Pfam" id="PF09334">
    <property type="entry name" value="tRNA-synt_1g"/>
    <property type="match status" value="1"/>
</dbReference>
<dbReference type="PRINTS" id="PR00985">
    <property type="entry name" value="TRNASYNTHLEU"/>
</dbReference>
<dbReference type="SUPFAM" id="SSF47323">
    <property type="entry name" value="Anticodon-binding domain of a subclass of class I aminoacyl-tRNA synthetases"/>
    <property type="match status" value="1"/>
</dbReference>
<dbReference type="SUPFAM" id="SSF52374">
    <property type="entry name" value="Nucleotidylyl transferase"/>
    <property type="match status" value="1"/>
</dbReference>
<dbReference type="SUPFAM" id="SSF50677">
    <property type="entry name" value="ValRS/IleRS/LeuRS editing domain"/>
    <property type="match status" value="1"/>
</dbReference>
<dbReference type="PROSITE" id="PS00178">
    <property type="entry name" value="AA_TRNA_LIGASE_I"/>
    <property type="match status" value="1"/>
</dbReference>